<geneLocation type="chloroplast"/>
<name>CYST_CHLVU</name>
<proteinExistence type="inferred from homology"/>
<reference key="1">
    <citation type="journal article" date="1997" name="Proc. Natl. Acad. Sci. U.S.A.">
        <title>Complete nucleotide sequence of the chloroplast genome from the green alga Chlorella vulgaris: the existence of genes possibly involved in chloroplast division.</title>
        <authorList>
            <person name="Wakasugi T."/>
            <person name="Nagai T."/>
            <person name="Kapoor M."/>
            <person name="Sugita M."/>
            <person name="Ito M."/>
            <person name="Ito S."/>
            <person name="Tsudzuki J."/>
            <person name="Nakashima K."/>
            <person name="Tsudzuki T."/>
            <person name="Suzuki Y."/>
            <person name="Hamada A."/>
            <person name="Ohta T."/>
            <person name="Inamura A."/>
            <person name="Yoshinaga K."/>
            <person name="Sugiura M."/>
        </authorList>
    </citation>
    <scope>NUCLEOTIDE SEQUENCE [LARGE SCALE GENOMIC DNA]</scope>
    <source>
        <strain>IAM C-27 / Tamiya</strain>
    </source>
</reference>
<feature type="chain" id="PRO_0000059994" description="Probable sulfate transport system permease protein cysT">
    <location>
        <begin position="1"/>
        <end position="266"/>
    </location>
</feature>
<feature type="transmembrane region" description="Helical" evidence="2">
    <location>
        <begin position="12"/>
        <end position="32"/>
    </location>
</feature>
<feature type="transmembrane region" description="Helical" evidence="2">
    <location>
        <begin position="59"/>
        <end position="79"/>
    </location>
</feature>
<feature type="transmembrane region" description="Helical" evidence="2">
    <location>
        <begin position="91"/>
        <end position="111"/>
    </location>
</feature>
<feature type="transmembrane region" description="Helical" evidence="2">
    <location>
        <begin position="129"/>
        <end position="149"/>
    </location>
</feature>
<feature type="transmembrane region" description="Helical" evidence="2">
    <location>
        <begin position="181"/>
        <end position="201"/>
    </location>
</feature>
<feature type="transmembrane region" description="Helical" evidence="2">
    <location>
        <begin position="206"/>
        <end position="226"/>
    </location>
</feature>
<feature type="transmembrane region" description="Helical" evidence="2">
    <location>
        <begin position="236"/>
        <end position="256"/>
    </location>
</feature>
<feature type="domain" description="ABC transmembrane type-1" evidence="2">
    <location>
        <begin position="53"/>
        <end position="257"/>
    </location>
</feature>
<organism>
    <name type="scientific">Chlorella vulgaris</name>
    <name type="common">Green alga</name>
    <dbReference type="NCBI Taxonomy" id="3077"/>
    <lineage>
        <taxon>Eukaryota</taxon>
        <taxon>Viridiplantae</taxon>
        <taxon>Chlorophyta</taxon>
        <taxon>core chlorophytes</taxon>
        <taxon>Trebouxiophyceae</taxon>
        <taxon>Chlorellales</taxon>
        <taxon>Chlorellaceae</taxon>
        <taxon>Chlorella clade</taxon>
        <taxon>Chlorella</taxon>
    </lineage>
</organism>
<comment type="function">
    <text evidence="1">Part of the ABC transporter complex cysAWTP (TC 3.A.1.6.1) involved in sulfate/thiosulfate import. Probably responsible for the translocation of the substrate across the membrane (By similarity).</text>
</comment>
<comment type="subcellular location">
    <subcellularLocation>
        <location evidence="3">Plastid</location>
        <location evidence="3">Chloroplast membrane</location>
        <topology evidence="3">Multi-pass membrane protein</topology>
    </subcellularLocation>
</comment>
<comment type="similarity">
    <text evidence="3">Belongs to the binding-protein-dependent transport system permease family. CysTW subfamily.</text>
</comment>
<gene>
    <name type="primary">cysT</name>
</gene>
<evidence type="ECO:0000250" key="1"/>
<evidence type="ECO:0000255" key="2">
    <source>
        <dbReference type="PROSITE-ProRule" id="PRU00441"/>
    </source>
</evidence>
<evidence type="ECO:0000305" key="3"/>
<sequence length="266" mass="30116">MKRYPTFIKNSILLFYFFFLLILPVVVLFLLIFQNNWHEVLRKATDPIAVSAYLLTVQMAFYAALVNSIFGFIITWVLTRYQFWGREFLDAAVDLPFALPTSVAGLTLATVYGDQGWIGSLFNLFGFQIVFTKIGVLLAMIFVSFPFVIRTLQPVLQEMEKSLEEAAWSLGASSWETFRKVILPTLWPALFTGFTLSFSRALGEFGSIVMISSNLPFKDLVASVLIYQSLEQYDYLGASVIGAVVLLIALFTLLLINAFQIMKFRV</sequence>
<protein>
    <recommendedName>
        <fullName>Probable sulfate transport system permease protein cysT</fullName>
    </recommendedName>
</protein>
<dbReference type="EMBL" id="AB001684">
    <property type="protein sequence ID" value="BAA57966.1"/>
    <property type="molecule type" value="Genomic_DNA"/>
</dbReference>
<dbReference type="PIR" id="T07318">
    <property type="entry name" value="T07318"/>
</dbReference>
<dbReference type="RefSeq" id="NP_045890.1">
    <property type="nucleotide sequence ID" value="NC_001865.1"/>
</dbReference>
<dbReference type="SMR" id="P56343"/>
<dbReference type="GeneID" id="809121"/>
<dbReference type="GO" id="GO:0031969">
    <property type="term" value="C:chloroplast membrane"/>
    <property type="evidence" value="ECO:0007669"/>
    <property type="project" value="UniProtKB-SubCell"/>
</dbReference>
<dbReference type="GO" id="GO:0005886">
    <property type="term" value="C:plasma membrane"/>
    <property type="evidence" value="ECO:0007669"/>
    <property type="project" value="InterPro"/>
</dbReference>
<dbReference type="GO" id="GO:0015419">
    <property type="term" value="F:ABC-type sulfate transporter activity"/>
    <property type="evidence" value="ECO:0007669"/>
    <property type="project" value="InterPro"/>
</dbReference>
<dbReference type="CDD" id="cd06261">
    <property type="entry name" value="TM_PBP2"/>
    <property type="match status" value="1"/>
</dbReference>
<dbReference type="FunFam" id="1.10.3720.10:FF:000004">
    <property type="entry name" value="Sulfate transport system permease protein CysT"/>
    <property type="match status" value="1"/>
</dbReference>
<dbReference type="Gene3D" id="1.10.3720.10">
    <property type="entry name" value="MetI-like"/>
    <property type="match status" value="1"/>
</dbReference>
<dbReference type="InterPro" id="IPR011865">
    <property type="entry name" value="CysT_permease"/>
</dbReference>
<dbReference type="InterPro" id="IPR000515">
    <property type="entry name" value="MetI-like"/>
</dbReference>
<dbReference type="InterPro" id="IPR035906">
    <property type="entry name" value="MetI-like_sf"/>
</dbReference>
<dbReference type="InterPro" id="IPR005667">
    <property type="entry name" value="Sulph_transpt2"/>
</dbReference>
<dbReference type="NCBIfam" id="TIGR00969">
    <property type="entry name" value="3a0106s02"/>
    <property type="match status" value="1"/>
</dbReference>
<dbReference type="NCBIfam" id="TIGR02139">
    <property type="entry name" value="permease_CysT"/>
    <property type="match status" value="1"/>
</dbReference>
<dbReference type="PANTHER" id="PTHR30406">
    <property type="entry name" value="SULFATE TRANSPORT SYSTEM PERMEASE PROTEIN"/>
    <property type="match status" value="1"/>
</dbReference>
<dbReference type="PANTHER" id="PTHR30406:SF8">
    <property type="entry name" value="SULFATE TRANSPORT SYSTEM PERMEASE PROTEIN CYST"/>
    <property type="match status" value="1"/>
</dbReference>
<dbReference type="Pfam" id="PF00528">
    <property type="entry name" value="BPD_transp_1"/>
    <property type="match status" value="1"/>
</dbReference>
<dbReference type="SUPFAM" id="SSF161098">
    <property type="entry name" value="MetI-like"/>
    <property type="match status" value="1"/>
</dbReference>
<dbReference type="PROSITE" id="PS50928">
    <property type="entry name" value="ABC_TM1"/>
    <property type="match status" value="1"/>
</dbReference>
<accession>P56343</accession>
<keyword id="KW-0150">Chloroplast</keyword>
<keyword id="KW-0472">Membrane</keyword>
<keyword id="KW-0934">Plastid</keyword>
<keyword id="KW-0764">Sulfate transport</keyword>
<keyword id="KW-0812">Transmembrane</keyword>
<keyword id="KW-1133">Transmembrane helix</keyword>
<keyword id="KW-0813">Transport</keyword>